<dbReference type="EC" id="1.4.4.2" evidence="1"/>
<dbReference type="EMBL" id="BA000018">
    <property type="protein sequence ID" value="BAB42627.1"/>
    <property type="molecule type" value="Genomic_DNA"/>
</dbReference>
<dbReference type="PIR" id="F89933">
    <property type="entry name" value="F89933"/>
</dbReference>
<dbReference type="RefSeq" id="WP_000202188.1">
    <property type="nucleotide sequence ID" value="NC_002745.2"/>
</dbReference>
<dbReference type="SMR" id="P99168"/>
<dbReference type="EnsemblBacteria" id="BAB42627">
    <property type="protein sequence ID" value="BAB42627"/>
    <property type="gene ID" value="BAB42627"/>
</dbReference>
<dbReference type="KEGG" id="sau:SA1365"/>
<dbReference type="HOGENOM" id="CLU_004620_5_0_9"/>
<dbReference type="GO" id="GO:0005829">
    <property type="term" value="C:cytosol"/>
    <property type="evidence" value="ECO:0007669"/>
    <property type="project" value="TreeGrafter"/>
</dbReference>
<dbReference type="GO" id="GO:0005960">
    <property type="term" value="C:glycine cleavage complex"/>
    <property type="evidence" value="ECO:0007669"/>
    <property type="project" value="TreeGrafter"/>
</dbReference>
<dbReference type="GO" id="GO:0016594">
    <property type="term" value="F:glycine binding"/>
    <property type="evidence" value="ECO:0007669"/>
    <property type="project" value="TreeGrafter"/>
</dbReference>
<dbReference type="GO" id="GO:0004375">
    <property type="term" value="F:glycine dehydrogenase (decarboxylating) activity"/>
    <property type="evidence" value="ECO:0007669"/>
    <property type="project" value="UniProtKB-EC"/>
</dbReference>
<dbReference type="GO" id="GO:0030170">
    <property type="term" value="F:pyridoxal phosphate binding"/>
    <property type="evidence" value="ECO:0007669"/>
    <property type="project" value="TreeGrafter"/>
</dbReference>
<dbReference type="GO" id="GO:0019464">
    <property type="term" value="P:glycine decarboxylation via glycine cleavage system"/>
    <property type="evidence" value="ECO:0007669"/>
    <property type="project" value="UniProtKB-UniRule"/>
</dbReference>
<dbReference type="CDD" id="cd00613">
    <property type="entry name" value="GDC-P"/>
    <property type="match status" value="1"/>
</dbReference>
<dbReference type="FunFam" id="3.40.640.10:FF:000034">
    <property type="entry name" value="Probable glycine dehydrogenase (decarboxylating) subunit 2"/>
    <property type="match status" value="1"/>
</dbReference>
<dbReference type="FunFam" id="3.90.1150.10:FF:000014">
    <property type="entry name" value="Probable glycine dehydrogenase (decarboxylating) subunit 2"/>
    <property type="match status" value="1"/>
</dbReference>
<dbReference type="Gene3D" id="6.20.440.10">
    <property type="match status" value="1"/>
</dbReference>
<dbReference type="Gene3D" id="3.90.1150.10">
    <property type="entry name" value="Aspartate Aminotransferase, domain 1"/>
    <property type="match status" value="1"/>
</dbReference>
<dbReference type="Gene3D" id="3.40.640.10">
    <property type="entry name" value="Type I PLP-dependent aspartate aminotransferase-like (Major domain)"/>
    <property type="match status" value="1"/>
</dbReference>
<dbReference type="HAMAP" id="MF_00713">
    <property type="entry name" value="GcvPB"/>
    <property type="match status" value="1"/>
</dbReference>
<dbReference type="InterPro" id="IPR000192">
    <property type="entry name" value="Aminotrans_V_dom"/>
</dbReference>
<dbReference type="InterPro" id="IPR023012">
    <property type="entry name" value="GcvPB"/>
</dbReference>
<dbReference type="InterPro" id="IPR049316">
    <property type="entry name" value="GDC-P_C"/>
</dbReference>
<dbReference type="InterPro" id="IPR020581">
    <property type="entry name" value="GDC_P"/>
</dbReference>
<dbReference type="InterPro" id="IPR015424">
    <property type="entry name" value="PyrdxlP-dep_Trfase"/>
</dbReference>
<dbReference type="InterPro" id="IPR015421">
    <property type="entry name" value="PyrdxlP-dep_Trfase_major"/>
</dbReference>
<dbReference type="InterPro" id="IPR015422">
    <property type="entry name" value="PyrdxlP-dep_Trfase_small"/>
</dbReference>
<dbReference type="NCBIfam" id="NF003346">
    <property type="entry name" value="PRK04366.1"/>
    <property type="match status" value="1"/>
</dbReference>
<dbReference type="PANTHER" id="PTHR11773:SF1">
    <property type="entry name" value="GLYCINE DEHYDROGENASE (DECARBOXYLATING), MITOCHONDRIAL"/>
    <property type="match status" value="1"/>
</dbReference>
<dbReference type="PANTHER" id="PTHR11773">
    <property type="entry name" value="GLYCINE DEHYDROGENASE, DECARBOXYLATING"/>
    <property type="match status" value="1"/>
</dbReference>
<dbReference type="Pfam" id="PF00266">
    <property type="entry name" value="Aminotran_5"/>
    <property type="match status" value="1"/>
</dbReference>
<dbReference type="Pfam" id="PF21478">
    <property type="entry name" value="GcvP2_C"/>
    <property type="match status" value="1"/>
</dbReference>
<dbReference type="SUPFAM" id="SSF53383">
    <property type="entry name" value="PLP-dependent transferases"/>
    <property type="match status" value="1"/>
</dbReference>
<accession>P99168</accession>
<accession>Q99TV9</accession>
<gene>
    <name evidence="1" type="primary">gcvPB</name>
    <name type="ordered locus">SA1365</name>
</gene>
<name>GCSPB_STAAN</name>
<comment type="function">
    <text evidence="1">The glycine cleavage system catalyzes the degradation of glycine. The P protein binds the alpha-amino group of glycine through its pyridoxal phosphate cofactor; CO(2) is released and the remaining methylamine moiety is then transferred to the lipoamide cofactor of the H protein.</text>
</comment>
<comment type="catalytic activity">
    <reaction evidence="1">
        <text>N(6)-[(R)-lipoyl]-L-lysyl-[glycine-cleavage complex H protein] + glycine + H(+) = N(6)-[(R)-S(8)-aminomethyldihydrolipoyl]-L-lysyl-[glycine-cleavage complex H protein] + CO2</text>
        <dbReference type="Rhea" id="RHEA:24304"/>
        <dbReference type="Rhea" id="RHEA-COMP:10494"/>
        <dbReference type="Rhea" id="RHEA-COMP:10495"/>
        <dbReference type="ChEBI" id="CHEBI:15378"/>
        <dbReference type="ChEBI" id="CHEBI:16526"/>
        <dbReference type="ChEBI" id="CHEBI:57305"/>
        <dbReference type="ChEBI" id="CHEBI:83099"/>
        <dbReference type="ChEBI" id="CHEBI:83143"/>
        <dbReference type="EC" id="1.4.4.2"/>
    </reaction>
</comment>
<comment type="cofactor">
    <cofactor evidence="1">
        <name>pyridoxal 5'-phosphate</name>
        <dbReference type="ChEBI" id="CHEBI:597326"/>
    </cofactor>
</comment>
<comment type="subunit">
    <text evidence="1">The glycine cleavage system is composed of four proteins: P, T, L and H. In this organism, the P 'protein' is a heterodimer of two subunits.</text>
</comment>
<comment type="similarity">
    <text evidence="1">Belongs to the GcvP family. C-terminal subunit subfamily.</text>
</comment>
<organism>
    <name type="scientific">Staphylococcus aureus (strain N315)</name>
    <dbReference type="NCBI Taxonomy" id="158879"/>
    <lineage>
        <taxon>Bacteria</taxon>
        <taxon>Bacillati</taxon>
        <taxon>Bacillota</taxon>
        <taxon>Bacilli</taxon>
        <taxon>Bacillales</taxon>
        <taxon>Staphylococcaceae</taxon>
        <taxon>Staphylococcus</taxon>
    </lineage>
</organism>
<proteinExistence type="evidence at protein level"/>
<reference key="1">
    <citation type="journal article" date="2001" name="Lancet">
        <title>Whole genome sequencing of meticillin-resistant Staphylococcus aureus.</title>
        <authorList>
            <person name="Kuroda M."/>
            <person name="Ohta T."/>
            <person name="Uchiyama I."/>
            <person name="Baba T."/>
            <person name="Yuzawa H."/>
            <person name="Kobayashi I."/>
            <person name="Cui L."/>
            <person name="Oguchi A."/>
            <person name="Aoki K."/>
            <person name="Nagai Y."/>
            <person name="Lian J.-Q."/>
            <person name="Ito T."/>
            <person name="Kanamori M."/>
            <person name="Matsumaru H."/>
            <person name="Maruyama A."/>
            <person name="Murakami H."/>
            <person name="Hosoyama A."/>
            <person name="Mizutani-Ui Y."/>
            <person name="Takahashi N.K."/>
            <person name="Sawano T."/>
            <person name="Inoue R."/>
            <person name="Kaito C."/>
            <person name="Sekimizu K."/>
            <person name="Hirakawa H."/>
            <person name="Kuhara S."/>
            <person name="Goto S."/>
            <person name="Yabuzaki J."/>
            <person name="Kanehisa M."/>
            <person name="Yamashita A."/>
            <person name="Oshima K."/>
            <person name="Furuya K."/>
            <person name="Yoshino C."/>
            <person name="Shiba T."/>
            <person name="Hattori M."/>
            <person name="Ogasawara N."/>
            <person name="Hayashi H."/>
            <person name="Hiramatsu K."/>
        </authorList>
    </citation>
    <scope>NUCLEOTIDE SEQUENCE [LARGE SCALE GENOMIC DNA]</scope>
    <source>
        <strain>N315</strain>
    </source>
</reference>
<reference key="2">
    <citation type="journal article" date="2005" name="J. Microbiol. Methods">
        <title>Correlation of proteomic and transcriptomic profiles of Staphylococcus aureus during the post-exponential phase of growth.</title>
        <authorList>
            <person name="Scherl A."/>
            <person name="Francois P."/>
            <person name="Bento M."/>
            <person name="Deshusses J.M."/>
            <person name="Charbonnier Y."/>
            <person name="Converset V."/>
            <person name="Huyghe A."/>
            <person name="Walter N."/>
            <person name="Hoogland C."/>
            <person name="Appel R.D."/>
            <person name="Sanchez J.-C."/>
            <person name="Zimmermann-Ivol C.G."/>
            <person name="Corthals G.L."/>
            <person name="Hochstrasser D.F."/>
            <person name="Schrenzel J."/>
        </authorList>
    </citation>
    <scope>IDENTIFICATION BY MASS SPECTROMETRY</scope>
    <source>
        <strain>N315</strain>
    </source>
</reference>
<reference key="3">
    <citation type="submission" date="2007-10" db="UniProtKB">
        <title>Shotgun proteomic analysis of total and membrane protein extracts of S. aureus strain N315.</title>
        <authorList>
            <person name="Vaezzadeh A.R."/>
            <person name="Deshusses J."/>
            <person name="Lescuyer P."/>
            <person name="Hochstrasser D.F."/>
        </authorList>
    </citation>
    <scope>IDENTIFICATION BY MASS SPECTROMETRY [LARGE SCALE ANALYSIS]</scope>
    <source>
        <strain>N315</strain>
    </source>
</reference>
<sequence>MTSKSSPLIFERSREGRYAYSLPKSDIKTNSVESLLDDKFIRKNKAEFPEVAELDLVRHYTELSNKNFGVDNGFYPLGSCTMKYNPKINEKVARIPGFSESHPLQDEDQVQGSLEIIYSLQEELKEITGMDEVTLQPAAGAHGEWTALMIFKAYHENNGEGHRDEVIVPDSAHGTNPASASFAGFKSVTVKSNERGEVDIDDLKRVVNENTAAIMLTNPNTLGIFEKNIMEIREIVHNAGGLLYYDGANLNAIMDKVRPGDMGFDAVHLNLHKTFTGPHGGGGPGSGPVGVVKELASYLPKPMVIKDGDKFKYDNDIKNSIGRVKPFYGNFGIYLRAYTYIRTMGATGLKEVSEAAVLNANYIKARLSEHFEIPYKQYCKHEFVLSGVRQKEFGVRTLDMAKRLLDFGVHPPTIYFPLNVEEGMMIEPTETESKETLDYFIDTLISIAEEAKNDPDKVLEAPHTTVIDRLDEATAARKPILKFENLKQEK</sequence>
<keyword id="KW-0560">Oxidoreductase</keyword>
<keyword id="KW-0663">Pyridoxal phosphate</keyword>
<protein>
    <recommendedName>
        <fullName evidence="1">Probable glycine dehydrogenase (decarboxylating) subunit 2</fullName>
        <ecNumber evidence="1">1.4.4.2</ecNumber>
    </recommendedName>
    <alternativeName>
        <fullName evidence="1">Glycine cleavage system P-protein subunit 2</fullName>
    </alternativeName>
    <alternativeName>
        <fullName evidence="1">Glycine decarboxylase subunit 2</fullName>
    </alternativeName>
    <alternativeName>
        <fullName evidence="1">Glycine dehydrogenase (aminomethyl-transferring) subunit 2</fullName>
    </alternativeName>
</protein>
<evidence type="ECO:0000255" key="1">
    <source>
        <dbReference type="HAMAP-Rule" id="MF_00713"/>
    </source>
</evidence>
<feature type="chain" id="PRO_0000167013" description="Probable glycine dehydrogenase (decarboxylating) subunit 2">
    <location>
        <begin position="1"/>
        <end position="490"/>
    </location>
</feature>
<feature type="modified residue" description="N6-(pyridoxal phosphate)lysine" evidence="1">
    <location>
        <position position="273"/>
    </location>
</feature>